<comment type="function">
    <text evidence="1">This protein is involved in the repair of mismatches in DNA. It is possible that it carries out the mismatch recognition step. This protein has a weak ATPase activity.</text>
</comment>
<comment type="similarity">
    <text evidence="1">Belongs to the DNA mismatch repair MutS family.</text>
</comment>
<proteinExistence type="inferred from homology"/>
<keyword id="KW-0067">ATP-binding</keyword>
<keyword id="KW-0227">DNA damage</keyword>
<keyword id="KW-0234">DNA repair</keyword>
<keyword id="KW-0238">DNA-binding</keyword>
<keyword id="KW-0547">Nucleotide-binding</keyword>
<name>MUTS_AZOVD</name>
<feature type="chain" id="PRO_1000202731" description="DNA mismatch repair protein MutS">
    <location>
        <begin position="1"/>
        <end position="855"/>
    </location>
</feature>
<feature type="binding site" evidence="1">
    <location>
        <begin position="613"/>
        <end position="620"/>
    </location>
    <ligand>
        <name>ATP</name>
        <dbReference type="ChEBI" id="CHEBI:30616"/>
    </ligand>
</feature>
<evidence type="ECO:0000255" key="1">
    <source>
        <dbReference type="HAMAP-Rule" id="MF_00096"/>
    </source>
</evidence>
<organism>
    <name type="scientific">Azotobacter vinelandii (strain DJ / ATCC BAA-1303)</name>
    <dbReference type="NCBI Taxonomy" id="322710"/>
    <lineage>
        <taxon>Bacteria</taxon>
        <taxon>Pseudomonadati</taxon>
        <taxon>Pseudomonadota</taxon>
        <taxon>Gammaproteobacteria</taxon>
        <taxon>Pseudomonadales</taxon>
        <taxon>Pseudomonadaceae</taxon>
        <taxon>Azotobacter</taxon>
    </lineage>
</organism>
<sequence length="855" mass="95122">MESLSQHTPMMQQYWKLKREHPDQLMFYRMGDFYELFYEDAKKAAKLLDITLTARGQSAGKSIPMAGIPFHSVEGYLAKLVKLGESVAICEQIGDPATTKGPVERQVVRIITPGTVSDEALLDERRDNLLAAVVGDERLFGLAILDITSGRFNVQEIQGWENLLAELERLNPAELLYPDDWPAGLPLEKRRGAHRRAPWDFDFDSAYKSLCQQFATQDLKGFGCDGLGLAIGAAGCLLAYARETQRTALPHLRGLRHERLDDTVILDGASRRNLELDVNLSGGRDNTLQSVIDRCQTAMGSRLLGRWLNRPLRDRAVLEARQDTVACLLQDYRFESLQPQLKEIGDVERILARIGLRNARPRDLARLRDALAALPQLQTALSPLEAPHLQALAGNIRTYPELAELLRRAIIDNPPAVIRDGGVLKQGYDAELDELLSLSENAGQFLMDLEAREKARTGLPNLKVGYNRIHGYYIELPRVQAEQAPADYIRRQTLKGAERFITPELKAFEDKALSAKSRALAREKALYEELLEILIAQLAPLQETATALAELDVLANLAERALNLDFNRPRFVEEPCLRIRQGRHPVVEQVLDTPFVANDLELDDNTRMLIITGPNMGGKSTYMRQTALIVLLAHIGSFVPAQSCELSLVDRIFTRIGSSDDLAGGRSTFMVEMSETANILHNASERSLVLMDEVGRGTSTFDGLSLAWAAAEHLAGLRAWTLFATHYFELTVLAESQPVVANVHLSATEHNERIVFLHHVLPGPASQSYGLAVAQLAGVPGPVISRAREHLARLEATSLPHEAPLREAGKPQPPIQSDLFASLPHPLMEELARLKPDDLSPRQALELLYSWKTRL</sequence>
<accession>C1DSR1</accession>
<reference key="1">
    <citation type="journal article" date="2009" name="J. Bacteriol.">
        <title>Genome sequence of Azotobacter vinelandii, an obligate aerobe specialized to support diverse anaerobic metabolic processes.</title>
        <authorList>
            <person name="Setubal J.C."/>
            <person name="Dos Santos P."/>
            <person name="Goldman B.S."/>
            <person name="Ertesvaag H."/>
            <person name="Espin G."/>
            <person name="Rubio L.M."/>
            <person name="Valla S."/>
            <person name="Almeida N.F."/>
            <person name="Balasubramanian D."/>
            <person name="Cromes L."/>
            <person name="Curatti L."/>
            <person name="Du Z."/>
            <person name="Godsy E."/>
            <person name="Goodner B."/>
            <person name="Hellner-Burris K."/>
            <person name="Hernandez J.A."/>
            <person name="Houmiel K."/>
            <person name="Imperial J."/>
            <person name="Kennedy C."/>
            <person name="Larson T.J."/>
            <person name="Latreille P."/>
            <person name="Ligon L.S."/>
            <person name="Lu J."/>
            <person name="Maerk M."/>
            <person name="Miller N.M."/>
            <person name="Norton S."/>
            <person name="O'Carroll I.P."/>
            <person name="Paulsen I."/>
            <person name="Raulfs E.C."/>
            <person name="Roemer R."/>
            <person name="Rosser J."/>
            <person name="Segura D."/>
            <person name="Slater S."/>
            <person name="Stricklin S.L."/>
            <person name="Studholme D.J."/>
            <person name="Sun J."/>
            <person name="Viana C.J."/>
            <person name="Wallin E."/>
            <person name="Wang B."/>
            <person name="Wheeler C."/>
            <person name="Zhu H."/>
            <person name="Dean D.R."/>
            <person name="Dixon R."/>
            <person name="Wood D."/>
        </authorList>
    </citation>
    <scope>NUCLEOTIDE SEQUENCE [LARGE SCALE GENOMIC DNA]</scope>
    <source>
        <strain>DJ / ATCC BAA-1303</strain>
    </source>
</reference>
<protein>
    <recommendedName>
        <fullName evidence="1">DNA mismatch repair protein MutS</fullName>
    </recommendedName>
</protein>
<gene>
    <name evidence="1" type="primary">mutS</name>
    <name type="ordered locus">Avin_38640</name>
</gene>
<dbReference type="EMBL" id="CP001157">
    <property type="protein sequence ID" value="ACO80004.1"/>
    <property type="molecule type" value="Genomic_DNA"/>
</dbReference>
<dbReference type="RefSeq" id="WP_012702379.1">
    <property type="nucleotide sequence ID" value="NC_012560.1"/>
</dbReference>
<dbReference type="SMR" id="C1DSR1"/>
<dbReference type="STRING" id="322710.Avin_38640"/>
<dbReference type="EnsemblBacteria" id="ACO80004">
    <property type="protein sequence ID" value="ACO80004"/>
    <property type="gene ID" value="Avin_38640"/>
</dbReference>
<dbReference type="GeneID" id="88186824"/>
<dbReference type="KEGG" id="avn:Avin_38640"/>
<dbReference type="eggNOG" id="COG0249">
    <property type="taxonomic scope" value="Bacteria"/>
</dbReference>
<dbReference type="HOGENOM" id="CLU_002472_4_0_6"/>
<dbReference type="OrthoDB" id="9802448at2"/>
<dbReference type="Proteomes" id="UP000002424">
    <property type="component" value="Chromosome"/>
</dbReference>
<dbReference type="GO" id="GO:0005829">
    <property type="term" value="C:cytosol"/>
    <property type="evidence" value="ECO:0007669"/>
    <property type="project" value="TreeGrafter"/>
</dbReference>
<dbReference type="GO" id="GO:0005524">
    <property type="term" value="F:ATP binding"/>
    <property type="evidence" value="ECO:0007669"/>
    <property type="project" value="UniProtKB-UniRule"/>
</dbReference>
<dbReference type="GO" id="GO:0140664">
    <property type="term" value="F:ATP-dependent DNA damage sensor activity"/>
    <property type="evidence" value="ECO:0007669"/>
    <property type="project" value="InterPro"/>
</dbReference>
<dbReference type="GO" id="GO:0003684">
    <property type="term" value="F:damaged DNA binding"/>
    <property type="evidence" value="ECO:0007669"/>
    <property type="project" value="UniProtKB-UniRule"/>
</dbReference>
<dbReference type="GO" id="GO:0030983">
    <property type="term" value="F:mismatched DNA binding"/>
    <property type="evidence" value="ECO:0007669"/>
    <property type="project" value="InterPro"/>
</dbReference>
<dbReference type="GO" id="GO:0006298">
    <property type="term" value="P:mismatch repair"/>
    <property type="evidence" value="ECO:0007669"/>
    <property type="project" value="UniProtKB-UniRule"/>
</dbReference>
<dbReference type="CDD" id="cd03284">
    <property type="entry name" value="ABC_MutS1"/>
    <property type="match status" value="1"/>
</dbReference>
<dbReference type="FunFam" id="1.10.1420.10:FF:000002">
    <property type="entry name" value="DNA mismatch repair protein MutS"/>
    <property type="match status" value="1"/>
</dbReference>
<dbReference type="FunFam" id="3.40.1170.10:FF:000001">
    <property type="entry name" value="DNA mismatch repair protein MutS"/>
    <property type="match status" value="1"/>
</dbReference>
<dbReference type="FunFam" id="3.40.50.300:FF:000283">
    <property type="entry name" value="DNA mismatch repair protein MutS"/>
    <property type="match status" value="1"/>
</dbReference>
<dbReference type="Gene3D" id="1.10.1420.10">
    <property type="match status" value="2"/>
</dbReference>
<dbReference type="Gene3D" id="6.10.140.430">
    <property type="match status" value="1"/>
</dbReference>
<dbReference type="Gene3D" id="3.40.1170.10">
    <property type="entry name" value="DNA repair protein MutS, domain I"/>
    <property type="match status" value="1"/>
</dbReference>
<dbReference type="Gene3D" id="3.30.420.110">
    <property type="entry name" value="MutS, connector domain"/>
    <property type="match status" value="1"/>
</dbReference>
<dbReference type="Gene3D" id="3.40.50.300">
    <property type="entry name" value="P-loop containing nucleotide triphosphate hydrolases"/>
    <property type="match status" value="1"/>
</dbReference>
<dbReference type="HAMAP" id="MF_00096">
    <property type="entry name" value="MutS"/>
    <property type="match status" value="1"/>
</dbReference>
<dbReference type="InterPro" id="IPR005748">
    <property type="entry name" value="DNA_mismatch_repair_MutS"/>
</dbReference>
<dbReference type="InterPro" id="IPR007695">
    <property type="entry name" value="DNA_mismatch_repair_MutS-lik_N"/>
</dbReference>
<dbReference type="InterPro" id="IPR017261">
    <property type="entry name" value="DNA_mismatch_repair_MutS/MSH"/>
</dbReference>
<dbReference type="InterPro" id="IPR000432">
    <property type="entry name" value="DNA_mismatch_repair_MutS_C"/>
</dbReference>
<dbReference type="InterPro" id="IPR007861">
    <property type="entry name" value="DNA_mismatch_repair_MutS_clamp"/>
</dbReference>
<dbReference type="InterPro" id="IPR007696">
    <property type="entry name" value="DNA_mismatch_repair_MutS_core"/>
</dbReference>
<dbReference type="InterPro" id="IPR016151">
    <property type="entry name" value="DNA_mismatch_repair_MutS_N"/>
</dbReference>
<dbReference type="InterPro" id="IPR036187">
    <property type="entry name" value="DNA_mismatch_repair_MutS_sf"/>
</dbReference>
<dbReference type="InterPro" id="IPR007860">
    <property type="entry name" value="DNA_mmatch_repair_MutS_con_dom"/>
</dbReference>
<dbReference type="InterPro" id="IPR045076">
    <property type="entry name" value="MutS"/>
</dbReference>
<dbReference type="InterPro" id="IPR036678">
    <property type="entry name" value="MutS_con_dom_sf"/>
</dbReference>
<dbReference type="InterPro" id="IPR027417">
    <property type="entry name" value="P-loop_NTPase"/>
</dbReference>
<dbReference type="NCBIfam" id="TIGR01070">
    <property type="entry name" value="mutS1"/>
    <property type="match status" value="1"/>
</dbReference>
<dbReference type="NCBIfam" id="NF003810">
    <property type="entry name" value="PRK05399.1"/>
    <property type="match status" value="1"/>
</dbReference>
<dbReference type="PANTHER" id="PTHR11361:SF34">
    <property type="entry name" value="DNA MISMATCH REPAIR PROTEIN MSH1, MITOCHONDRIAL"/>
    <property type="match status" value="1"/>
</dbReference>
<dbReference type="PANTHER" id="PTHR11361">
    <property type="entry name" value="DNA MISMATCH REPAIR PROTEIN MUTS FAMILY MEMBER"/>
    <property type="match status" value="1"/>
</dbReference>
<dbReference type="Pfam" id="PF01624">
    <property type="entry name" value="MutS_I"/>
    <property type="match status" value="1"/>
</dbReference>
<dbReference type="Pfam" id="PF05188">
    <property type="entry name" value="MutS_II"/>
    <property type="match status" value="1"/>
</dbReference>
<dbReference type="Pfam" id="PF05192">
    <property type="entry name" value="MutS_III"/>
    <property type="match status" value="1"/>
</dbReference>
<dbReference type="Pfam" id="PF05190">
    <property type="entry name" value="MutS_IV"/>
    <property type="match status" value="1"/>
</dbReference>
<dbReference type="Pfam" id="PF00488">
    <property type="entry name" value="MutS_V"/>
    <property type="match status" value="1"/>
</dbReference>
<dbReference type="PIRSF" id="PIRSF037677">
    <property type="entry name" value="DNA_mis_repair_Msh6"/>
    <property type="match status" value="1"/>
</dbReference>
<dbReference type="SMART" id="SM00534">
    <property type="entry name" value="MUTSac"/>
    <property type="match status" value="1"/>
</dbReference>
<dbReference type="SMART" id="SM00533">
    <property type="entry name" value="MUTSd"/>
    <property type="match status" value="1"/>
</dbReference>
<dbReference type="SUPFAM" id="SSF55271">
    <property type="entry name" value="DNA repair protein MutS, domain I"/>
    <property type="match status" value="1"/>
</dbReference>
<dbReference type="SUPFAM" id="SSF53150">
    <property type="entry name" value="DNA repair protein MutS, domain II"/>
    <property type="match status" value="1"/>
</dbReference>
<dbReference type="SUPFAM" id="SSF48334">
    <property type="entry name" value="DNA repair protein MutS, domain III"/>
    <property type="match status" value="1"/>
</dbReference>
<dbReference type="SUPFAM" id="SSF52540">
    <property type="entry name" value="P-loop containing nucleoside triphosphate hydrolases"/>
    <property type="match status" value="1"/>
</dbReference>
<dbReference type="PROSITE" id="PS00486">
    <property type="entry name" value="DNA_MISMATCH_REPAIR_2"/>
    <property type="match status" value="1"/>
</dbReference>